<comment type="function">
    <text evidence="1">Plays an essential role in the initiation and regulation of chromosomal replication. ATP-DnaA binds to the origin of replication (oriC) to initiate formation of the DNA replication initiation complex once per cell cycle. Binds the DnaA box (a 9 base pair repeat at the origin) and separates the double-stranded (ds)DNA. Forms a right-handed helical filament on oriC DNA; dsDNA binds to the exterior of the filament while single-stranded (ss)DNA is stabiized in the filament's interior. The ATP-DnaA-oriC complex binds and stabilizes one strand of the AT-rich DNA unwinding element (DUE), permitting loading of DNA polymerase. After initiation quickly degrades to an ADP-DnaA complex that is not apt for DNA replication. Binds acidic phospholipids.</text>
</comment>
<comment type="subunit">
    <text evidence="1">Oligomerizes as a right-handed, spiral filament on DNA at oriC.</text>
</comment>
<comment type="subcellular location">
    <subcellularLocation>
        <location evidence="1">Cytoplasm</location>
    </subcellularLocation>
</comment>
<comment type="domain">
    <text evidence="1">Domain I is involved in oligomerization and binding regulators, domain II is flexibile and of varying length in different bacteria, domain III forms the AAA+ region, while domain IV binds dsDNA.</text>
</comment>
<comment type="similarity">
    <text evidence="1">Belongs to the DnaA family.</text>
</comment>
<organism>
    <name type="scientific">Burkholderia pseudomallei (strain K96243)</name>
    <dbReference type="NCBI Taxonomy" id="272560"/>
    <lineage>
        <taxon>Bacteria</taxon>
        <taxon>Pseudomonadati</taxon>
        <taxon>Pseudomonadota</taxon>
        <taxon>Betaproteobacteria</taxon>
        <taxon>Burkholderiales</taxon>
        <taxon>Burkholderiaceae</taxon>
        <taxon>Burkholderia</taxon>
        <taxon>pseudomallei group</taxon>
    </lineage>
</organism>
<evidence type="ECO:0000255" key="1">
    <source>
        <dbReference type="HAMAP-Rule" id="MF_00377"/>
    </source>
</evidence>
<evidence type="ECO:0000256" key="2">
    <source>
        <dbReference type="SAM" id="MobiDB-lite"/>
    </source>
</evidence>
<name>DNAA_BURPS</name>
<proteinExistence type="inferred from homology"/>
<protein>
    <recommendedName>
        <fullName evidence="1">Chromosomal replication initiator protein DnaA</fullName>
    </recommendedName>
</protein>
<dbReference type="EMBL" id="BX571965">
    <property type="protein sequence ID" value="CAH34058.1"/>
    <property type="molecule type" value="Genomic_DNA"/>
</dbReference>
<dbReference type="RefSeq" id="WP_004525818.1">
    <property type="nucleotide sequence ID" value="NZ_CP009538.1"/>
</dbReference>
<dbReference type="RefSeq" id="YP_106700.1">
    <property type="nucleotide sequence ID" value="NC_006350.1"/>
</dbReference>
<dbReference type="SMR" id="Q63YW5"/>
<dbReference type="STRING" id="272560.BPSL0075"/>
<dbReference type="KEGG" id="bps:BPSL0075"/>
<dbReference type="PATRIC" id="fig|272560.51.peg.1660"/>
<dbReference type="eggNOG" id="COG0593">
    <property type="taxonomic scope" value="Bacteria"/>
</dbReference>
<dbReference type="Proteomes" id="UP000000605">
    <property type="component" value="Chromosome 1"/>
</dbReference>
<dbReference type="GO" id="GO:0005737">
    <property type="term" value="C:cytoplasm"/>
    <property type="evidence" value="ECO:0007669"/>
    <property type="project" value="UniProtKB-SubCell"/>
</dbReference>
<dbReference type="GO" id="GO:0005886">
    <property type="term" value="C:plasma membrane"/>
    <property type="evidence" value="ECO:0007669"/>
    <property type="project" value="TreeGrafter"/>
</dbReference>
<dbReference type="GO" id="GO:0005524">
    <property type="term" value="F:ATP binding"/>
    <property type="evidence" value="ECO:0007669"/>
    <property type="project" value="UniProtKB-UniRule"/>
</dbReference>
<dbReference type="GO" id="GO:0016887">
    <property type="term" value="F:ATP hydrolysis activity"/>
    <property type="evidence" value="ECO:0007669"/>
    <property type="project" value="InterPro"/>
</dbReference>
<dbReference type="GO" id="GO:0003688">
    <property type="term" value="F:DNA replication origin binding"/>
    <property type="evidence" value="ECO:0007669"/>
    <property type="project" value="UniProtKB-UniRule"/>
</dbReference>
<dbReference type="GO" id="GO:0008289">
    <property type="term" value="F:lipid binding"/>
    <property type="evidence" value="ECO:0007669"/>
    <property type="project" value="UniProtKB-KW"/>
</dbReference>
<dbReference type="GO" id="GO:0006270">
    <property type="term" value="P:DNA replication initiation"/>
    <property type="evidence" value="ECO:0007669"/>
    <property type="project" value="UniProtKB-UniRule"/>
</dbReference>
<dbReference type="GO" id="GO:0006275">
    <property type="term" value="P:regulation of DNA replication"/>
    <property type="evidence" value="ECO:0007669"/>
    <property type="project" value="UniProtKB-UniRule"/>
</dbReference>
<dbReference type="CDD" id="cd00009">
    <property type="entry name" value="AAA"/>
    <property type="match status" value="1"/>
</dbReference>
<dbReference type="CDD" id="cd06571">
    <property type="entry name" value="Bac_DnaA_C"/>
    <property type="match status" value="1"/>
</dbReference>
<dbReference type="FunFam" id="1.10.8.60:FF:000003">
    <property type="entry name" value="Chromosomal replication initiator protein DnaA"/>
    <property type="match status" value="1"/>
</dbReference>
<dbReference type="FunFam" id="3.40.50.300:FF:000668">
    <property type="entry name" value="Chromosomal replication initiator protein DnaA"/>
    <property type="match status" value="1"/>
</dbReference>
<dbReference type="Gene3D" id="1.10.1750.10">
    <property type="match status" value="1"/>
</dbReference>
<dbReference type="Gene3D" id="1.10.8.60">
    <property type="match status" value="1"/>
</dbReference>
<dbReference type="Gene3D" id="3.30.300.180">
    <property type="match status" value="1"/>
</dbReference>
<dbReference type="Gene3D" id="3.40.50.300">
    <property type="entry name" value="P-loop containing nucleotide triphosphate hydrolases"/>
    <property type="match status" value="1"/>
</dbReference>
<dbReference type="HAMAP" id="MF_00377">
    <property type="entry name" value="DnaA_bact"/>
    <property type="match status" value="1"/>
</dbReference>
<dbReference type="InterPro" id="IPR003593">
    <property type="entry name" value="AAA+_ATPase"/>
</dbReference>
<dbReference type="InterPro" id="IPR001957">
    <property type="entry name" value="Chromosome_initiator_DnaA"/>
</dbReference>
<dbReference type="InterPro" id="IPR020591">
    <property type="entry name" value="Chromosome_initiator_DnaA-like"/>
</dbReference>
<dbReference type="InterPro" id="IPR018312">
    <property type="entry name" value="Chromosome_initiator_DnaA_CS"/>
</dbReference>
<dbReference type="InterPro" id="IPR013159">
    <property type="entry name" value="DnaA_C"/>
</dbReference>
<dbReference type="InterPro" id="IPR013317">
    <property type="entry name" value="DnaA_dom"/>
</dbReference>
<dbReference type="InterPro" id="IPR024633">
    <property type="entry name" value="DnaA_N_dom"/>
</dbReference>
<dbReference type="InterPro" id="IPR038454">
    <property type="entry name" value="DnaA_N_sf"/>
</dbReference>
<dbReference type="InterPro" id="IPR055199">
    <property type="entry name" value="Hda_lid"/>
</dbReference>
<dbReference type="InterPro" id="IPR027417">
    <property type="entry name" value="P-loop_NTPase"/>
</dbReference>
<dbReference type="InterPro" id="IPR010921">
    <property type="entry name" value="Trp_repressor/repl_initiator"/>
</dbReference>
<dbReference type="NCBIfam" id="TIGR00362">
    <property type="entry name" value="DnaA"/>
    <property type="match status" value="1"/>
</dbReference>
<dbReference type="PANTHER" id="PTHR30050">
    <property type="entry name" value="CHROMOSOMAL REPLICATION INITIATOR PROTEIN DNAA"/>
    <property type="match status" value="1"/>
</dbReference>
<dbReference type="PANTHER" id="PTHR30050:SF2">
    <property type="entry name" value="CHROMOSOMAL REPLICATION INITIATOR PROTEIN DNAA"/>
    <property type="match status" value="1"/>
</dbReference>
<dbReference type="Pfam" id="PF00308">
    <property type="entry name" value="Bac_DnaA"/>
    <property type="match status" value="1"/>
</dbReference>
<dbReference type="Pfam" id="PF08299">
    <property type="entry name" value="Bac_DnaA_C"/>
    <property type="match status" value="1"/>
</dbReference>
<dbReference type="Pfam" id="PF11638">
    <property type="entry name" value="DnaA_N"/>
    <property type="match status" value="1"/>
</dbReference>
<dbReference type="Pfam" id="PF22688">
    <property type="entry name" value="Hda_lid"/>
    <property type="match status" value="1"/>
</dbReference>
<dbReference type="PRINTS" id="PR00051">
    <property type="entry name" value="DNAA"/>
</dbReference>
<dbReference type="SMART" id="SM00382">
    <property type="entry name" value="AAA"/>
    <property type="match status" value="1"/>
</dbReference>
<dbReference type="SMART" id="SM00760">
    <property type="entry name" value="Bac_DnaA_C"/>
    <property type="match status" value="1"/>
</dbReference>
<dbReference type="SUPFAM" id="SSF52540">
    <property type="entry name" value="P-loop containing nucleoside triphosphate hydrolases"/>
    <property type="match status" value="1"/>
</dbReference>
<dbReference type="SUPFAM" id="SSF48295">
    <property type="entry name" value="TrpR-like"/>
    <property type="match status" value="1"/>
</dbReference>
<dbReference type="PROSITE" id="PS01008">
    <property type="entry name" value="DNAA"/>
    <property type="match status" value="1"/>
</dbReference>
<accession>Q63YW5</accession>
<gene>
    <name evidence="1" type="primary">dnaA</name>
    <name type="ordered locus">BPSL0075</name>
</gene>
<sequence>MNDFWQHCSALLERELTPQQYVTWIKPLAPVAFDAAANTLSIAAPNRFKLDWVKSQFSGRISDLARDFWNAPIEVQFVLDPKAGQRSPAGATPLAPRAPLPSANPAPVAPGPASAPAVDAHAPAPAGMNAATAAAVAAAQAAQAAQANAAALNADEAADLDLPSLTAHEAAAGRRTWRPGAANANSEAADSMYERSKLNPVLTFDNFVTGKANQLARAAAIQVADNPGISYNPLFLYGGVGLGKTHLIHAIGNQLLLDKPGARIRYIHAEQYVSDVVKAYQRKAFDDFKRYYHSLDLLLIDDIQFFSGKSRTQEEFFYAFEALVANKAQVIITSDTYPKEISGIDDRLISRFDSGLTVAIEPPELEMRVAILMRKAQSEGVSLSEDVAFFVAKHLRSNVRELEGALRKILAYSKFHGREITIELTKEALKDLLTVQNRQISVENIQKTVADFYNIKVADMYSKKRPANIARPRQIAMYLAKELTQKSLPEIGELFGGRDHTTVLHAVRKIADERGKDAQLNHELHVLEQTLKG</sequence>
<keyword id="KW-0067">ATP-binding</keyword>
<keyword id="KW-0963">Cytoplasm</keyword>
<keyword id="KW-0235">DNA replication</keyword>
<keyword id="KW-0238">DNA-binding</keyword>
<keyword id="KW-0446">Lipid-binding</keyword>
<keyword id="KW-0547">Nucleotide-binding</keyword>
<keyword id="KW-1185">Reference proteome</keyword>
<feature type="chain" id="PRO_0000114151" description="Chromosomal replication initiator protein DnaA">
    <location>
        <begin position="1"/>
        <end position="533"/>
    </location>
</feature>
<feature type="region of interest" description="Domain I, interacts with DnaA modulators" evidence="1">
    <location>
        <begin position="1"/>
        <end position="72"/>
    </location>
</feature>
<feature type="region of interest" description="Domain II" evidence="1">
    <location>
        <begin position="72"/>
        <end position="196"/>
    </location>
</feature>
<feature type="region of interest" description="Disordered" evidence="2">
    <location>
        <begin position="83"/>
        <end position="120"/>
    </location>
</feature>
<feature type="region of interest" description="Domain III, AAA+ region" evidence="1">
    <location>
        <begin position="197"/>
        <end position="413"/>
    </location>
</feature>
<feature type="region of interest" description="Domain IV, binds dsDNA" evidence="1">
    <location>
        <begin position="414"/>
        <end position="533"/>
    </location>
</feature>
<feature type="compositionally biased region" description="Pro residues" evidence="2">
    <location>
        <begin position="96"/>
        <end position="110"/>
    </location>
</feature>
<feature type="compositionally biased region" description="Low complexity" evidence="2">
    <location>
        <begin position="111"/>
        <end position="120"/>
    </location>
</feature>
<feature type="binding site" evidence="1">
    <location>
        <position position="241"/>
    </location>
    <ligand>
        <name>ATP</name>
        <dbReference type="ChEBI" id="CHEBI:30616"/>
    </ligand>
</feature>
<feature type="binding site" evidence="1">
    <location>
        <position position="243"/>
    </location>
    <ligand>
        <name>ATP</name>
        <dbReference type="ChEBI" id="CHEBI:30616"/>
    </ligand>
</feature>
<feature type="binding site" evidence="1">
    <location>
        <position position="244"/>
    </location>
    <ligand>
        <name>ATP</name>
        <dbReference type="ChEBI" id="CHEBI:30616"/>
    </ligand>
</feature>
<feature type="binding site" evidence="1">
    <location>
        <position position="245"/>
    </location>
    <ligand>
        <name>ATP</name>
        <dbReference type="ChEBI" id="CHEBI:30616"/>
    </ligand>
</feature>
<reference key="1">
    <citation type="journal article" date="2004" name="Proc. Natl. Acad. Sci. U.S.A.">
        <title>Genomic plasticity of the causative agent of melioidosis, Burkholderia pseudomallei.</title>
        <authorList>
            <person name="Holden M.T.G."/>
            <person name="Titball R.W."/>
            <person name="Peacock S.J."/>
            <person name="Cerdeno-Tarraga A.-M."/>
            <person name="Atkins T."/>
            <person name="Crossman L.C."/>
            <person name="Pitt T."/>
            <person name="Churcher C."/>
            <person name="Mungall K.L."/>
            <person name="Bentley S.D."/>
            <person name="Sebaihia M."/>
            <person name="Thomson N.R."/>
            <person name="Bason N."/>
            <person name="Beacham I.R."/>
            <person name="Brooks K."/>
            <person name="Brown K.A."/>
            <person name="Brown N.F."/>
            <person name="Challis G.L."/>
            <person name="Cherevach I."/>
            <person name="Chillingworth T."/>
            <person name="Cronin A."/>
            <person name="Crossett B."/>
            <person name="Davis P."/>
            <person name="DeShazer D."/>
            <person name="Feltwell T."/>
            <person name="Fraser A."/>
            <person name="Hance Z."/>
            <person name="Hauser H."/>
            <person name="Holroyd S."/>
            <person name="Jagels K."/>
            <person name="Keith K.E."/>
            <person name="Maddison M."/>
            <person name="Moule S."/>
            <person name="Price C."/>
            <person name="Quail M.A."/>
            <person name="Rabbinowitsch E."/>
            <person name="Rutherford K."/>
            <person name="Sanders M."/>
            <person name="Simmonds M."/>
            <person name="Songsivilai S."/>
            <person name="Stevens K."/>
            <person name="Tumapa S."/>
            <person name="Vesaratchavest M."/>
            <person name="Whitehead S."/>
            <person name="Yeats C."/>
            <person name="Barrell B.G."/>
            <person name="Oyston P.C.F."/>
            <person name="Parkhill J."/>
        </authorList>
    </citation>
    <scope>NUCLEOTIDE SEQUENCE [LARGE SCALE GENOMIC DNA]</scope>
    <source>
        <strain>K96243</strain>
    </source>
</reference>